<accession>Q0DKY4</accession>
<accession>P46611</accession>
<accession>Q6AVZ2</accession>
<accession>Q8VXC5</accession>
<evidence type="ECO:0000250" key="1"/>
<evidence type="ECO:0000250" key="2">
    <source>
        <dbReference type="UniProtKB" id="P0A817"/>
    </source>
</evidence>
<evidence type="ECO:0000250" key="3">
    <source>
        <dbReference type="UniProtKB" id="P13444"/>
    </source>
</evidence>
<evidence type="ECO:0000250" key="4">
    <source>
        <dbReference type="UniProtKB" id="Q00266"/>
    </source>
</evidence>
<evidence type="ECO:0000250" key="5">
    <source>
        <dbReference type="UniProtKB" id="Q96551"/>
    </source>
</evidence>
<evidence type="ECO:0000305" key="6"/>
<reference key="1">
    <citation type="journal article" date="2005" name="Mol. Genet. Genomics">
        <title>A fine physical map of the rice chromosome 5.</title>
        <authorList>
            <person name="Cheng C.-H."/>
            <person name="Chung M.C."/>
            <person name="Liu S.-M."/>
            <person name="Chen S.-K."/>
            <person name="Kao F.Y."/>
            <person name="Lin S.-J."/>
            <person name="Hsiao S.-H."/>
            <person name="Tseng I.C."/>
            <person name="Hsing Y.-I.C."/>
            <person name="Wu H.-P."/>
            <person name="Chen C.-S."/>
            <person name="Shaw J.-F."/>
            <person name="Wu J."/>
            <person name="Matsumoto T."/>
            <person name="Sasaki T."/>
            <person name="Chen H.-C."/>
            <person name="Chow T.-Y."/>
        </authorList>
    </citation>
    <scope>NUCLEOTIDE SEQUENCE [LARGE SCALE GENOMIC DNA]</scope>
    <source>
        <strain>cv. Nipponbare</strain>
    </source>
</reference>
<reference key="2">
    <citation type="journal article" date="2005" name="Nature">
        <title>The map-based sequence of the rice genome.</title>
        <authorList>
            <consortium name="International rice genome sequencing project (IRGSP)"/>
        </authorList>
    </citation>
    <scope>NUCLEOTIDE SEQUENCE [LARGE SCALE GENOMIC DNA]</scope>
    <source>
        <strain>cv. Nipponbare</strain>
    </source>
</reference>
<reference key="3">
    <citation type="journal article" date="2008" name="Nucleic Acids Res.">
        <title>The rice annotation project database (RAP-DB): 2008 update.</title>
        <authorList>
            <consortium name="The rice annotation project (RAP)"/>
        </authorList>
    </citation>
    <scope>GENOME REANNOTATION</scope>
    <source>
        <strain>cv. Nipponbare</strain>
    </source>
</reference>
<reference key="4">
    <citation type="journal article" date="2013" name="Rice">
        <title>Improvement of the Oryza sativa Nipponbare reference genome using next generation sequence and optical map data.</title>
        <authorList>
            <person name="Kawahara Y."/>
            <person name="de la Bastide M."/>
            <person name="Hamilton J.P."/>
            <person name="Kanamori H."/>
            <person name="McCombie W.R."/>
            <person name="Ouyang S."/>
            <person name="Schwartz D.C."/>
            <person name="Tanaka T."/>
            <person name="Wu J."/>
            <person name="Zhou S."/>
            <person name="Childs K.L."/>
            <person name="Davidson R.M."/>
            <person name="Lin H."/>
            <person name="Quesada-Ocampo L."/>
            <person name="Vaillancourt B."/>
            <person name="Sakai H."/>
            <person name="Lee S.S."/>
            <person name="Kim J."/>
            <person name="Numa H."/>
            <person name="Itoh T."/>
            <person name="Buell C.R."/>
            <person name="Matsumoto T."/>
        </authorList>
    </citation>
    <scope>GENOME REANNOTATION</scope>
    <source>
        <strain>cv. Nipponbare</strain>
    </source>
</reference>
<reference key="5">
    <citation type="journal article" date="2005" name="PLoS Biol.">
        <title>The genomes of Oryza sativa: a history of duplications.</title>
        <authorList>
            <person name="Yu J."/>
            <person name="Wang J."/>
            <person name="Lin W."/>
            <person name="Li S."/>
            <person name="Li H."/>
            <person name="Zhou J."/>
            <person name="Ni P."/>
            <person name="Dong W."/>
            <person name="Hu S."/>
            <person name="Zeng C."/>
            <person name="Zhang J."/>
            <person name="Zhang Y."/>
            <person name="Li R."/>
            <person name="Xu Z."/>
            <person name="Li S."/>
            <person name="Li X."/>
            <person name="Zheng H."/>
            <person name="Cong L."/>
            <person name="Lin L."/>
            <person name="Yin J."/>
            <person name="Geng J."/>
            <person name="Li G."/>
            <person name="Shi J."/>
            <person name="Liu J."/>
            <person name="Lv H."/>
            <person name="Li J."/>
            <person name="Wang J."/>
            <person name="Deng Y."/>
            <person name="Ran L."/>
            <person name="Shi X."/>
            <person name="Wang X."/>
            <person name="Wu Q."/>
            <person name="Li C."/>
            <person name="Ren X."/>
            <person name="Wang J."/>
            <person name="Wang X."/>
            <person name="Li D."/>
            <person name="Liu D."/>
            <person name="Zhang X."/>
            <person name="Ji Z."/>
            <person name="Zhao W."/>
            <person name="Sun Y."/>
            <person name="Zhang Z."/>
            <person name="Bao J."/>
            <person name="Han Y."/>
            <person name="Dong L."/>
            <person name="Ji J."/>
            <person name="Chen P."/>
            <person name="Wu S."/>
            <person name="Liu J."/>
            <person name="Xiao Y."/>
            <person name="Bu D."/>
            <person name="Tan J."/>
            <person name="Yang L."/>
            <person name="Ye C."/>
            <person name="Zhang J."/>
            <person name="Xu J."/>
            <person name="Zhou Y."/>
            <person name="Yu Y."/>
            <person name="Zhang B."/>
            <person name="Zhuang S."/>
            <person name="Wei H."/>
            <person name="Liu B."/>
            <person name="Lei M."/>
            <person name="Yu H."/>
            <person name="Li Y."/>
            <person name="Xu H."/>
            <person name="Wei S."/>
            <person name="He X."/>
            <person name="Fang L."/>
            <person name="Zhang Z."/>
            <person name="Zhang Y."/>
            <person name="Huang X."/>
            <person name="Su Z."/>
            <person name="Tong W."/>
            <person name="Li J."/>
            <person name="Tong Z."/>
            <person name="Li S."/>
            <person name="Ye J."/>
            <person name="Wang L."/>
            <person name="Fang L."/>
            <person name="Lei T."/>
            <person name="Chen C.-S."/>
            <person name="Chen H.-C."/>
            <person name="Xu Z."/>
            <person name="Li H."/>
            <person name="Huang H."/>
            <person name="Zhang F."/>
            <person name="Xu H."/>
            <person name="Li N."/>
            <person name="Zhao C."/>
            <person name="Li S."/>
            <person name="Dong L."/>
            <person name="Huang Y."/>
            <person name="Li L."/>
            <person name="Xi Y."/>
            <person name="Qi Q."/>
            <person name="Li W."/>
            <person name="Zhang B."/>
            <person name="Hu W."/>
            <person name="Zhang Y."/>
            <person name="Tian X."/>
            <person name="Jiao Y."/>
            <person name="Liang X."/>
            <person name="Jin J."/>
            <person name="Gao L."/>
            <person name="Zheng W."/>
            <person name="Hao B."/>
            <person name="Liu S.-M."/>
            <person name="Wang W."/>
            <person name="Yuan L."/>
            <person name="Cao M."/>
            <person name="McDermott J."/>
            <person name="Samudrala R."/>
            <person name="Wang J."/>
            <person name="Wong G.K.-S."/>
            <person name="Yang H."/>
        </authorList>
    </citation>
    <scope>NUCLEOTIDE SEQUENCE [LARGE SCALE GENOMIC DNA]</scope>
    <source>
        <strain>cv. Nipponbare</strain>
    </source>
</reference>
<reference key="6">
    <citation type="journal article" date="2003" name="Science">
        <title>Collection, mapping, and annotation of over 28,000 cDNA clones from japonica rice.</title>
        <authorList>
            <consortium name="The rice full-length cDNA consortium"/>
        </authorList>
    </citation>
    <scope>NUCLEOTIDE SEQUENCE [LARGE SCALE MRNA]</scope>
    <source>
        <strain>cv. Nipponbare</strain>
    </source>
</reference>
<organism>
    <name type="scientific">Oryza sativa subsp. japonica</name>
    <name type="common">Rice</name>
    <dbReference type="NCBI Taxonomy" id="39947"/>
    <lineage>
        <taxon>Eukaryota</taxon>
        <taxon>Viridiplantae</taxon>
        <taxon>Streptophyta</taxon>
        <taxon>Embryophyta</taxon>
        <taxon>Tracheophyta</taxon>
        <taxon>Spermatophyta</taxon>
        <taxon>Magnoliopsida</taxon>
        <taxon>Liliopsida</taxon>
        <taxon>Poales</taxon>
        <taxon>Poaceae</taxon>
        <taxon>BOP clade</taxon>
        <taxon>Oryzoideae</taxon>
        <taxon>Oryzeae</taxon>
        <taxon>Oryzinae</taxon>
        <taxon>Oryza</taxon>
        <taxon>Oryza sativa</taxon>
    </lineage>
</organism>
<keyword id="KW-0067">ATP-binding</keyword>
<keyword id="KW-0170">Cobalt</keyword>
<keyword id="KW-0963">Cytoplasm</keyword>
<keyword id="KW-0460">Magnesium</keyword>
<keyword id="KW-0479">Metal-binding</keyword>
<keyword id="KW-0547">Nucleotide-binding</keyword>
<keyword id="KW-0554">One-carbon metabolism</keyword>
<keyword id="KW-0630">Potassium</keyword>
<keyword id="KW-1185">Reference proteome</keyword>
<keyword id="KW-0808">Transferase</keyword>
<protein>
    <recommendedName>
        <fullName>S-adenosylmethionine synthase 1</fullName>
        <shortName>AdoMet synthase 1</shortName>
        <ecNumber evidence="5">2.5.1.6</ecNumber>
    </recommendedName>
    <alternativeName>
        <fullName>Methionine adenosyltransferase 1</fullName>
        <shortName>MAT 1</shortName>
    </alternativeName>
</protein>
<dbReference type="EC" id="2.5.1.6" evidence="5"/>
<dbReference type="EMBL" id="AC087552">
    <property type="protein sequence ID" value="AAT94053.1"/>
    <property type="molecule type" value="Genomic_DNA"/>
</dbReference>
<dbReference type="EMBL" id="AP008211">
    <property type="protein sequence ID" value="BAF16489.1"/>
    <property type="molecule type" value="Genomic_DNA"/>
</dbReference>
<dbReference type="EMBL" id="AP014961">
    <property type="protein sequence ID" value="BAS92150.1"/>
    <property type="molecule type" value="Genomic_DNA"/>
</dbReference>
<dbReference type="EMBL" id="CM000142">
    <property type="protein sequence ID" value="EAZ32788.1"/>
    <property type="molecule type" value="Genomic_DNA"/>
</dbReference>
<dbReference type="EMBL" id="AK072051">
    <property type="status" value="NOT_ANNOTATED_CDS"/>
    <property type="molecule type" value="mRNA"/>
</dbReference>
<dbReference type="RefSeq" id="XP_015638780.1">
    <property type="nucleotide sequence ID" value="XM_015783294.1"/>
</dbReference>
<dbReference type="SMR" id="Q0DKY4"/>
<dbReference type="FunCoup" id="Q0DKY4">
    <property type="interactions" value="2244"/>
</dbReference>
<dbReference type="STRING" id="39947.Q0DKY4"/>
<dbReference type="PaxDb" id="39947-Q0DKY4"/>
<dbReference type="EnsemblPlants" id="Os05t0135700-01">
    <property type="protein sequence ID" value="Os05t0135700-01"/>
    <property type="gene ID" value="Os05g0135700"/>
</dbReference>
<dbReference type="EnsemblPlants" id="Os05t0135700-02">
    <property type="protein sequence ID" value="Os05t0135700-02"/>
    <property type="gene ID" value="Os05g0135700"/>
</dbReference>
<dbReference type="Gramene" id="Os05t0135700-01">
    <property type="protein sequence ID" value="Os05t0135700-01"/>
    <property type="gene ID" value="Os05g0135700"/>
</dbReference>
<dbReference type="Gramene" id="Os05t0135700-02">
    <property type="protein sequence ID" value="Os05t0135700-02"/>
    <property type="gene ID" value="Os05g0135700"/>
</dbReference>
<dbReference type="KEGG" id="dosa:Os05g0135700"/>
<dbReference type="eggNOG" id="KOG1506">
    <property type="taxonomic scope" value="Eukaryota"/>
</dbReference>
<dbReference type="HOGENOM" id="CLU_041802_0_1_1"/>
<dbReference type="InParanoid" id="Q0DKY4"/>
<dbReference type="OMA" id="YINPCGR"/>
<dbReference type="OrthoDB" id="726439at2759"/>
<dbReference type="PlantReactome" id="R-OSA-1119334">
    <property type="pathway name" value="Ethylene biosynthesis from methionine"/>
</dbReference>
<dbReference type="PlantReactome" id="R-OSA-1119501">
    <property type="pathway name" value="S-adenosyl-L-methionine cycle"/>
</dbReference>
<dbReference type="PlantReactome" id="R-OSA-1119624">
    <property type="pathway name" value="Methionine salvage pathway"/>
</dbReference>
<dbReference type="PlantReactome" id="R-OSA-9025754">
    <property type="pathway name" value="Mugineic acid biosynthesis"/>
</dbReference>
<dbReference type="UniPathway" id="UPA00315">
    <property type="reaction ID" value="UER00080"/>
</dbReference>
<dbReference type="Proteomes" id="UP000000763">
    <property type="component" value="Chromosome 5"/>
</dbReference>
<dbReference type="Proteomes" id="UP000007752">
    <property type="component" value="Chromosome 5"/>
</dbReference>
<dbReference type="Proteomes" id="UP000059680">
    <property type="component" value="Chromosome 5"/>
</dbReference>
<dbReference type="ExpressionAtlas" id="Q0DKY4">
    <property type="expression patterns" value="baseline and differential"/>
</dbReference>
<dbReference type="GO" id="GO:0005829">
    <property type="term" value="C:cytosol"/>
    <property type="evidence" value="ECO:0000318"/>
    <property type="project" value="GO_Central"/>
</dbReference>
<dbReference type="GO" id="GO:0005524">
    <property type="term" value="F:ATP binding"/>
    <property type="evidence" value="ECO:0007669"/>
    <property type="project" value="UniProtKB-KW"/>
</dbReference>
<dbReference type="GO" id="GO:0046872">
    <property type="term" value="F:metal ion binding"/>
    <property type="evidence" value="ECO:0007669"/>
    <property type="project" value="UniProtKB-KW"/>
</dbReference>
<dbReference type="GO" id="GO:0004478">
    <property type="term" value="F:methionine adenosyltransferase activity"/>
    <property type="evidence" value="ECO:0000318"/>
    <property type="project" value="GO_Central"/>
</dbReference>
<dbReference type="GO" id="GO:0006730">
    <property type="term" value="P:one-carbon metabolic process"/>
    <property type="evidence" value="ECO:0007669"/>
    <property type="project" value="UniProtKB-KW"/>
</dbReference>
<dbReference type="GO" id="GO:0006556">
    <property type="term" value="P:S-adenosylmethionine biosynthetic process"/>
    <property type="evidence" value="ECO:0000318"/>
    <property type="project" value="GO_Central"/>
</dbReference>
<dbReference type="CDD" id="cd18079">
    <property type="entry name" value="S-AdoMet_synt"/>
    <property type="match status" value="1"/>
</dbReference>
<dbReference type="FunFam" id="3.30.300.10:FF:000001">
    <property type="entry name" value="S-adenosylmethionine synthase"/>
    <property type="match status" value="1"/>
</dbReference>
<dbReference type="FunFam" id="3.30.300.10:FF:000003">
    <property type="entry name" value="S-adenosylmethionine synthase"/>
    <property type="match status" value="1"/>
</dbReference>
<dbReference type="FunFam" id="3.30.300.10:FF:000004">
    <property type="entry name" value="S-adenosylmethionine synthase"/>
    <property type="match status" value="1"/>
</dbReference>
<dbReference type="Gene3D" id="3.30.300.10">
    <property type="match status" value="3"/>
</dbReference>
<dbReference type="HAMAP" id="MF_00086">
    <property type="entry name" value="S_AdoMet_synth1"/>
    <property type="match status" value="1"/>
</dbReference>
<dbReference type="InterPro" id="IPR022631">
    <property type="entry name" value="ADOMET_SYNTHASE_CS"/>
</dbReference>
<dbReference type="InterPro" id="IPR022630">
    <property type="entry name" value="S-AdoMet_synt_C"/>
</dbReference>
<dbReference type="InterPro" id="IPR022629">
    <property type="entry name" value="S-AdoMet_synt_central"/>
</dbReference>
<dbReference type="InterPro" id="IPR022628">
    <property type="entry name" value="S-AdoMet_synt_N"/>
</dbReference>
<dbReference type="InterPro" id="IPR002133">
    <property type="entry name" value="S-AdoMet_synthetase"/>
</dbReference>
<dbReference type="InterPro" id="IPR022636">
    <property type="entry name" value="S-AdoMet_synthetase_sfam"/>
</dbReference>
<dbReference type="NCBIfam" id="TIGR01034">
    <property type="entry name" value="metK"/>
    <property type="match status" value="1"/>
</dbReference>
<dbReference type="PANTHER" id="PTHR11964">
    <property type="entry name" value="S-ADENOSYLMETHIONINE SYNTHETASE"/>
    <property type="match status" value="1"/>
</dbReference>
<dbReference type="Pfam" id="PF02773">
    <property type="entry name" value="S-AdoMet_synt_C"/>
    <property type="match status" value="1"/>
</dbReference>
<dbReference type="Pfam" id="PF02772">
    <property type="entry name" value="S-AdoMet_synt_M"/>
    <property type="match status" value="1"/>
</dbReference>
<dbReference type="Pfam" id="PF00438">
    <property type="entry name" value="S-AdoMet_synt_N"/>
    <property type="match status" value="1"/>
</dbReference>
<dbReference type="PIRSF" id="PIRSF000497">
    <property type="entry name" value="MAT"/>
    <property type="match status" value="1"/>
</dbReference>
<dbReference type="SUPFAM" id="SSF55973">
    <property type="entry name" value="S-adenosylmethionine synthetase"/>
    <property type="match status" value="3"/>
</dbReference>
<dbReference type="PROSITE" id="PS00376">
    <property type="entry name" value="ADOMET_SYNTHASE_1"/>
    <property type="match status" value="1"/>
</dbReference>
<dbReference type="PROSITE" id="PS00377">
    <property type="entry name" value="ADOMET_SYNTHASE_2"/>
    <property type="match status" value="1"/>
</dbReference>
<sequence length="396" mass="43220">MAALDTFLFTSESVNEGHPDKLCDQVSDAVLDACLAEDPDSKVACETCTKTNMVMVFGEITTKANVDYEKIVRETCRNIGFVSADVGLDADHCKVLVNIEQQSPDIAQGVHGHFTKRPEEIGAGDQGHMFGYATDETPELMPLSHVLATKLGARLTEVRKNGTCAWLRPDGKTQVTVEYRNESGARVPVRVHTVLISTQHDETVTNDEIAADLKEHVIKPVIPEQYLDEKTIFHLNPSGRFVIGGPHGDAGLTGRKIIIDTYGGWGAHGGGAFSGKDPTKVDRSGAYVARQAAKSIVASGLARRCIVQVSYAIGVPEPLSVFVDTYGTGRIPDKEILKIVKENFDFRPGMIIINLDLKKGGNGRYLKTAAYGHFGRDDPDFTWEVVKPLKWEKPSA</sequence>
<feature type="chain" id="PRO_0000174470" description="S-adenosylmethionine synthase 1">
    <location>
        <begin position="1"/>
        <end position="396"/>
    </location>
</feature>
<feature type="binding site" evidence="3">
    <location>
        <position position="12"/>
    </location>
    <ligand>
        <name>Mg(2+)</name>
        <dbReference type="ChEBI" id="CHEBI:18420"/>
    </ligand>
</feature>
<feature type="binding site" description="in other chain" evidence="4">
    <location>
        <position position="18"/>
    </location>
    <ligand>
        <name>ATP</name>
        <dbReference type="ChEBI" id="CHEBI:30616"/>
        <note>ligand shared between two neighboring subunits</note>
    </ligand>
</feature>
<feature type="binding site" evidence="2">
    <location>
        <position position="46"/>
    </location>
    <ligand>
        <name>K(+)</name>
        <dbReference type="ChEBI" id="CHEBI:29103"/>
    </ligand>
</feature>
<feature type="binding site" description="in other chain" evidence="2">
    <location>
        <position position="59"/>
    </location>
    <ligand>
        <name>L-methionine</name>
        <dbReference type="ChEBI" id="CHEBI:57844"/>
        <note>ligand shared between two neighboring subunits</note>
    </ligand>
</feature>
<feature type="binding site" description="in other chain" evidence="2">
    <location>
        <position position="102"/>
    </location>
    <ligand>
        <name>L-methionine</name>
        <dbReference type="ChEBI" id="CHEBI:57844"/>
        <note>ligand shared between two neighboring subunits</note>
    </ligand>
</feature>
<feature type="binding site" description="in other chain" evidence="4">
    <location>
        <begin position="170"/>
        <end position="172"/>
    </location>
    <ligand>
        <name>ATP</name>
        <dbReference type="ChEBI" id="CHEBI:30616"/>
        <note>ligand shared between two neighboring subunits</note>
    </ligand>
</feature>
<feature type="binding site" description="in other chain" evidence="4">
    <location>
        <begin position="238"/>
        <end position="241"/>
    </location>
    <ligand>
        <name>ATP</name>
        <dbReference type="ChEBI" id="CHEBI:30616"/>
        <note>ligand shared between two neighboring subunits</note>
    </ligand>
</feature>
<feature type="binding site" description="in other chain" evidence="4">
    <location>
        <position position="249"/>
    </location>
    <ligand>
        <name>ATP</name>
        <dbReference type="ChEBI" id="CHEBI:30616"/>
        <note>ligand shared between two neighboring subunits</note>
    </ligand>
</feature>
<feature type="binding site" evidence="2">
    <location>
        <position position="249"/>
    </location>
    <ligand>
        <name>L-methionine</name>
        <dbReference type="ChEBI" id="CHEBI:57844"/>
        <note>ligand shared between two neighboring subunits</note>
    </ligand>
</feature>
<feature type="binding site" description="in other chain" evidence="2">
    <location>
        <begin position="255"/>
        <end position="256"/>
    </location>
    <ligand>
        <name>ATP</name>
        <dbReference type="ChEBI" id="CHEBI:30616"/>
        <note>ligand shared between two neighboring subunits</note>
    </ligand>
</feature>
<feature type="binding site" evidence="2">
    <location>
        <position position="272"/>
    </location>
    <ligand>
        <name>ATP</name>
        <dbReference type="ChEBI" id="CHEBI:30616"/>
        <note>ligand shared between two neighboring subunits</note>
    </ligand>
</feature>
<feature type="binding site" evidence="2">
    <location>
        <position position="276"/>
    </location>
    <ligand>
        <name>ATP</name>
        <dbReference type="ChEBI" id="CHEBI:30616"/>
        <note>ligand shared between two neighboring subunits</note>
    </ligand>
</feature>
<feature type="binding site" evidence="3">
    <location>
        <position position="280"/>
    </location>
    <ligand>
        <name>ATP</name>
        <dbReference type="ChEBI" id="CHEBI:30616"/>
        <note>ligand shared between two neighboring subunits</note>
    </ligand>
</feature>
<feature type="binding site" description="in other chain" evidence="2">
    <location>
        <position position="280"/>
    </location>
    <ligand>
        <name>L-methionine</name>
        <dbReference type="ChEBI" id="CHEBI:57844"/>
        <note>ligand shared between two neighboring subunits</note>
    </ligand>
</feature>
<proteinExistence type="evidence at transcript level"/>
<gene>
    <name type="primary">SAM1</name>
    <name type="synonym">SAMS</name>
    <name type="ordered locus">Os05g0135700</name>
    <name type="ordered locus">LOC_Os05g04510</name>
    <name type="ORF">OsJ_016271</name>
    <name type="ORF">P0519E07.14</name>
</gene>
<comment type="function">
    <text evidence="5">Catalyzes the formation of S-adenosylmethionine from methionine and ATP. The reaction comprises two steps that are both catalyzed by the same enzyme: formation of S-adenosylmethionine (AdoMet) and triphosphate, and subsequent hydrolysis of the triphosphate.</text>
</comment>
<comment type="catalytic activity">
    <reaction evidence="5">
        <text>L-methionine + ATP + H2O = S-adenosyl-L-methionine + phosphate + diphosphate</text>
        <dbReference type="Rhea" id="RHEA:21080"/>
        <dbReference type="ChEBI" id="CHEBI:15377"/>
        <dbReference type="ChEBI" id="CHEBI:30616"/>
        <dbReference type="ChEBI" id="CHEBI:33019"/>
        <dbReference type="ChEBI" id="CHEBI:43474"/>
        <dbReference type="ChEBI" id="CHEBI:57844"/>
        <dbReference type="ChEBI" id="CHEBI:59789"/>
        <dbReference type="EC" id="2.5.1.6"/>
    </reaction>
</comment>
<comment type="cofactor">
    <cofactor evidence="5">
        <name>Mn(2+)</name>
        <dbReference type="ChEBI" id="CHEBI:29035"/>
    </cofactor>
    <cofactor evidence="5">
        <name>Mg(2+)</name>
        <dbReference type="ChEBI" id="CHEBI:18420"/>
    </cofactor>
    <cofactor evidence="5">
        <name>Co(2+)</name>
        <dbReference type="ChEBI" id="CHEBI:48828"/>
    </cofactor>
    <text evidence="3 5">Binds 2 divalent ions per subunit. The metal ions interact primarily with the substrate (By similarity). Can utilize magnesium, manganese or cobalt (in vitro) (By similarity).</text>
</comment>
<comment type="cofactor">
    <cofactor evidence="5">
        <name>K(+)</name>
        <dbReference type="ChEBI" id="CHEBI:29103"/>
    </cofactor>
    <text evidence="3">Binds 1 potassium ion per subunit. The potassium ion interacts primarily with the substrate (By similarity).</text>
</comment>
<comment type="pathway">
    <text evidence="5">Amino-acid biosynthesis; S-adenosyl-L-methionine biosynthesis; S-adenosyl-L-methionine from L-methionine: step 1/1.</text>
</comment>
<comment type="subunit">
    <text evidence="1">Homotetramer.</text>
</comment>
<comment type="subcellular location">
    <subcellularLocation>
        <location evidence="1">Cytoplasm</location>
    </subcellularLocation>
</comment>
<comment type="similarity">
    <text evidence="6">Belongs to the AdoMet synthase family.</text>
</comment>
<name>METK1_ORYSJ</name>